<reference key="1">
    <citation type="journal article" date="2006" name="PLoS Genet.">
        <title>The complete genome sequence and comparative genome analysis of the high pathogenicity Yersinia enterocolitica strain 8081.</title>
        <authorList>
            <person name="Thomson N.R."/>
            <person name="Howard S."/>
            <person name="Wren B.W."/>
            <person name="Holden M.T.G."/>
            <person name="Crossman L."/>
            <person name="Challis G.L."/>
            <person name="Churcher C."/>
            <person name="Mungall K."/>
            <person name="Brooks K."/>
            <person name="Chillingworth T."/>
            <person name="Feltwell T."/>
            <person name="Abdellah Z."/>
            <person name="Hauser H."/>
            <person name="Jagels K."/>
            <person name="Maddison M."/>
            <person name="Moule S."/>
            <person name="Sanders M."/>
            <person name="Whitehead S."/>
            <person name="Quail M.A."/>
            <person name="Dougan G."/>
            <person name="Parkhill J."/>
            <person name="Prentice M.B."/>
        </authorList>
    </citation>
    <scope>NUCLEOTIDE SEQUENCE [LARGE SCALE GENOMIC DNA]</scope>
    <source>
        <strain>NCTC 13174 / 8081</strain>
    </source>
</reference>
<organism>
    <name type="scientific">Yersinia enterocolitica serotype O:8 / biotype 1B (strain NCTC 13174 / 8081)</name>
    <dbReference type="NCBI Taxonomy" id="393305"/>
    <lineage>
        <taxon>Bacteria</taxon>
        <taxon>Pseudomonadati</taxon>
        <taxon>Pseudomonadota</taxon>
        <taxon>Gammaproteobacteria</taxon>
        <taxon>Enterobacterales</taxon>
        <taxon>Yersiniaceae</taxon>
        <taxon>Yersinia</taxon>
    </lineage>
</organism>
<gene>
    <name evidence="1" type="primary">rnfC</name>
    <name type="ordered locus">YE1992</name>
</gene>
<comment type="function">
    <text evidence="1">Part of a membrane-bound complex that couples electron transfer with translocation of ions across the membrane.</text>
</comment>
<comment type="cofactor">
    <cofactor evidence="1">
        <name>[4Fe-4S] cluster</name>
        <dbReference type="ChEBI" id="CHEBI:49883"/>
    </cofactor>
    <text evidence="1">Binds 2 [4Fe-4S] clusters per subunit.</text>
</comment>
<comment type="subunit">
    <text evidence="1">The complex is composed of six subunits: RnfA, RnfB, RnfC, RnfD, RnfE and RnfG.</text>
</comment>
<comment type="subcellular location">
    <subcellularLocation>
        <location evidence="1">Cell inner membrane</location>
        <topology evidence="1">Peripheral membrane protein</topology>
    </subcellularLocation>
</comment>
<comment type="similarity">
    <text evidence="1">Belongs to the 4Fe4S bacterial-type ferredoxin family. RnfC subfamily.</text>
</comment>
<keyword id="KW-0004">4Fe-4S</keyword>
<keyword id="KW-0997">Cell inner membrane</keyword>
<keyword id="KW-1003">Cell membrane</keyword>
<keyword id="KW-0249">Electron transport</keyword>
<keyword id="KW-0408">Iron</keyword>
<keyword id="KW-0411">Iron-sulfur</keyword>
<keyword id="KW-0472">Membrane</keyword>
<keyword id="KW-0479">Metal-binding</keyword>
<keyword id="KW-0677">Repeat</keyword>
<keyword id="KW-1278">Translocase</keyword>
<keyword id="KW-0813">Transport</keyword>
<feature type="chain" id="PRO_1000013617" description="Ion-translocating oxidoreductase complex subunit C">
    <location>
        <begin position="1"/>
        <end position="697"/>
    </location>
</feature>
<feature type="domain" description="4Fe-4S ferredoxin-type 1" evidence="1">
    <location>
        <begin position="366"/>
        <end position="397"/>
    </location>
</feature>
<feature type="domain" description="4Fe-4S ferredoxin-type 2" evidence="1">
    <location>
        <begin position="407"/>
        <end position="436"/>
    </location>
</feature>
<feature type="region of interest" description="Disordered" evidence="2">
    <location>
        <begin position="576"/>
        <end position="674"/>
    </location>
</feature>
<feature type="compositionally biased region" description="Basic and acidic residues" evidence="2">
    <location>
        <begin position="581"/>
        <end position="596"/>
    </location>
</feature>
<feature type="compositionally biased region" description="Low complexity" evidence="2">
    <location>
        <begin position="597"/>
        <end position="615"/>
    </location>
</feature>
<feature type="compositionally biased region" description="Basic and acidic residues" evidence="2">
    <location>
        <begin position="619"/>
        <end position="634"/>
    </location>
</feature>
<feature type="compositionally biased region" description="Low complexity" evidence="2">
    <location>
        <begin position="635"/>
        <end position="653"/>
    </location>
</feature>
<feature type="compositionally biased region" description="Basic and acidic residues" evidence="2">
    <location>
        <begin position="657"/>
        <end position="672"/>
    </location>
</feature>
<feature type="binding site" evidence="1">
    <location>
        <position position="377"/>
    </location>
    <ligand>
        <name>[4Fe-4S] cluster</name>
        <dbReference type="ChEBI" id="CHEBI:49883"/>
        <label>1</label>
    </ligand>
</feature>
<feature type="binding site" evidence="1">
    <location>
        <position position="380"/>
    </location>
    <ligand>
        <name>[4Fe-4S] cluster</name>
        <dbReference type="ChEBI" id="CHEBI:49883"/>
        <label>1</label>
    </ligand>
</feature>
<feature type="binding site" evidence="1">
    <location>
        <position position="383"/>
    </location>
    <ligand>
        <name>[4Fe-4S] cluster</name>
        <dbReference type="ChEBI" id="CHEBI:49883"/>
        <label>1</label>
    </ligand>
</feature>
<feature type="binding site" evidence="1">
    <location>
        <position position="387"/>
    </location>
    <ligand>
        <name>[4Fe-4S] cluster</name>
        <dbReference type="ChEBI" id="CHEBI:49883"/>
        <label>2</label>
    </ligand>
</feature>
<feature type="binding site" evidence="1">
    <location>
        <position position="416"/>
    </location>
    <ligand>
        <name>[4Fe-4S] cluster</name>
        <dbReference type="ChEBI" id="CHEBI:49883"/>
        <label>2</label>
    </ligand>
</feature>
<feature type="binding site" evidence="1">
    <location>
        <position position="419"/>
    </location>
    <ligand>
        <name>[4Fe-4S] cluster</name>
        <dbReference type="ChEBI" id="CHEBI:49883"/>
        <label>2</label>
    </ligand>
</feature>
<feature type="binding site" evidence="1">
    <location>
        <position position="422"/>
    </location>
    <ligand>
        <name>[4Fe-4S] cluster</name>
        <dbReference type="ChEBI" id="CHEBI:49883"/>
        <label>2</label>
    </ligand>
</feature>
<feature type="binding site" evidence="1">
    <location>
        <position position="426"/>
    </location>
    <ligand>
        <name>[4Fe-4S] cluster</name>
        <dbReference type="ChEBI" id="CHEBI:49883"/>
        <label>1</label>
    </ligand>
</feature>
<sequence length="697" mass="75240">MFKLFTARKHDNIWDFDGGIHPPEMKLQSSRVPMRIATLPEQLIVPLQQHLGPEGELRVSTGERVLKGQPLTVGRGRTVPVHAPTSGVITAIAPHTTAHPSGLAELCVHITPDGEDRWREQQPWADYSLRDKTALLERIHQAGIAGLGGAGFPTASKLQGGLNSVTTLIINAAECEPYITADDRLMQEHASEVVLGTQILMYLLQPQQVLIGIEDNKPEAIAALQHALRGQDEIQLRVIPTKYPSGGAKQLTKILTGKEVPFGKHSSSIGVLMQNVGTVVAIKRAIIDDEPLIERVVTLTGDALSKPGNFWARIGTPVLHLLKLAGFTPQNQPMVIMGGPLMGFTLSSLDVPIVKISNCILAPTEAEMGLSEPEQSCIRCGLCVDACPAGLLPQQLYWFSRGEEHEKARNHNLFDCIECGACAYVCPSNIPLVQYYRQEKAEIRTLDQEAERAAQAKARFEAKQARLEREKIARELRHKQAAVKLTDVDQQTVEAAVSRLARETNNTDSTISVTLGQPPDNSAVIAAREARKAQARARQVEKKLAAAEPETDAIDPRQAAVAAAIARVKAKKAAQAQLESEPVKSESEAPEEDPRKAAVAAAIARVKAKKAAQAQLESEPVKSESEAPEEDPRKAAVAAAIARVKAKKAAQAQLESEPVKSESEAPEEDPRKAAVAAAIARVKAKKAAQSASAVNPD</sequence>
<dbReference type="EC" id="7.-.-.-" evidence="1"/>
<dbReference type="EMBL" id="AM286415">
    <property type="protein sequence ID" value="CAL12071.1"/>
    <property type="molecule type" value="Genomic_DNA"/>
</dbReference>
<dbReference type="RefSeq" id="WP_011816279.1">
    <property type="nucleotide sequence ID" value="NC_008800.1"/>
</dbReference>
<dbReference type="RefSeq" id="YP_001006245.1">
    <property type="nucleotide sequence ID" value="NC_008800.1"/>
</dbReference>
<dbReference type="SMR" id="A1JM81"/>
<dbReference type="KEGG" id="yen:YE1992"/>
<dbReference type="PATRIC" id="fig|393305.7.peg.2154"/>
<dbReference type="eggNOG" id="COG4656">
    <property type="taxonomic scope" value="Bacteria"/>
</dbReference>
<dbReference type="HOGENOM" id="CLU_010808_2_1_6"/>
<dbReference type="OrthoDB" id="9767754at2"/>
<dbReference type="Proteomes" id="UP000000642">
    <property type="component" value="Chromosome"/>
</dbReference>
<dbReference type="GO" id="GO:0005886">
    <property type="term" value="C:plasma membrane"/>
    <property type="evidence" value="ECO:0007669"/>
    <property type="project" value="UniProtKB-SubCell"/>
</dbReference>
<dbReference type="GO" id="GO:0051539">
    <property type="term" value="F:4 iron, 4 sulfur cluster binding"/>
    <property type="evidence" value="ECO:0007669"/>
    <property type="project" value="UniProtKB-KW"/>
</dbReference>
<dbReference type="GO" id="GO:0009055">
    <property type="term" value="F:electron transfer activity"/>
    <property type="evidence" value="ECO:0007669"/>
    <property type="project" value="InterPro"/>
</dbReference>
<dbReference type="GO" id="GO:0046872">
    <property type="term" value="F:metal ion binding"/>
    <property type="evidence" value="ECO:0007669"/>
    <property type="project" value="UniProtKB-KW"/>
</dbReference>
<dbReference type="GO" id="GO:0022900">
    <property type="term" value="P:electron transport chain"/>
    <property type="evidence" value="ECO:0007669"/>
    <property type="project" value="UniProtKB-UniRule"/>
</dbReference>
<dbReference type="Gene3D" id="3.30.70.20">
    <property type="match status" value="1"/>
</dbReference>
<dbReference type="Gene3D" id="3.40.50.11540">
    <property type="entry name" value="NADH-ubiquinone oxidoreductase 51kDa subunit"/>
    <property type="match status" value="1"/>
</dbReference>
<dbReference type="HAMAP" id="MF_00461">
    <property type="entry name" value="RsxC_RnfC"/>
    <property type="match status" value="1"/>
</dbReference>
<dbReference type="InterPro" id="IPR017896">
    <property type="entry name" value="4Fe4S_Fe-S-bd"/>
</dbReference>
<dbReference type="InterPro" id="IPR017900">
    <property type="entry name" value="4Fe4S_Fe_S_CS"/>
</dbReference>
<dbReference type="InterPro" id="IPR010208">
    <property type="entry name" value="Ion_transpt_RnfC/RsxC"/>
</dbReference>
<dbReference type="InterPro" id="IPR011538">
    <property type="entry name" value="Nuo51_FMN-bd"/>
</dbReference>
<dbReference type="InterPro" id="IPR037225">
    <property type="entry name" value="Nuo51_FMN-bd_sf"/>
</dbReference>
<dbReference type="InterPro" id="IPR026902">
    <property type="entry name" value="RnfC_N"/>
</dbReference>
<dbReference type="InterPro" id="IPR019554">
    <property type="entry name" value="Soluble_ligand-bd"/>
</dbReference>
<dbReference type="NCBIfam" id="NF003454">
    <property type="entry name" value="PRK05035.1"/>
    <property type="match status" value="1"/>
</dbReference>
<dbReference type="NCBIfam" id="TIGR01945">
    <property type="entry name" value="rnfC"/>
    <property type="match status" value="1"/>
</dbReference>
<dbReference type="PANTHER" id="PTHR43034">
    <property type="entry name" value="ION-TRANSLOCATING OXIDOREDUCTASE COMPLEX SUBUNIT C"/>
    <property type="match status" value="1"/>
</dbReference>
<dbReference type="PANTHER" id="PTHR43034:SF2">
    <property type="entry name" value="ION-TRANSLOCATING OXIDOREDUCTASE COMPLEX SUBUNIT C"/>
    <property type="match status" value="1"/>
</dbReference>
<dbReference type="Pfam" id="PF01512">
    <property type="entry name" value="Complex1_51K"/>
    <property type="match status" value="1"/>
</dbReference>
<dbReference type="Pfam" id="PF12838">
    <property type="entry name" value="Fer4_7"/>
    <property type="match status" value="1"/>
</dbReference>
<dbReference type="Pfam" id="PF13375">
    <property type="entry name" value="RnfC_N"/>
    <property type="match status" value="1"/>
</dbReference>
<dbReference type="Pfam" id="PF10531">
    <property type="entry name" value="SLBB"/>
    <property type="match status" value="1"/>
</dbReference>
<dbReference type="SUPFAM" id="SSF46548">
    <property type="entry name" value="alpha-helical ferredoxin"/>
    <property type="match status" value="1"/>
</dbReference>
<dbReference type="SUPFAM" id="SSF142019">
    <property type="entry name" value="Nqo1 FMN-binding domain-like"/>
    <property type="match status" value="1"/>
</dbReference>
<dbReference type="PROSITE" id="PS00198">
    <property type="entry name" value="4FE4S_FER_1"/>
    <property type="match status" value="2"/>
</dbReference>
<dbReference type="PROSITE" id="PS51379">
    <property type="entry name" value="4FE4S_FER_2"/>
    <property type="match status" value="2"/>
</dbReference>
<name>RNFC_YERE8</name>
<proteinExistence type="inferred from homology"/>
<accession>A1JM81</accession>
<protein>
    <recommendedName>
        <fullName evidence="1">Ion-translocating oxidoreductase complex subunit C</fullName>
        <ecNumber evidence="1">7.-.-.-</ecNumber>
    </recommendedName>
    <alternativeName>
        <fullName evidence="1">Rnf electron transport complex subunit C</fullName>
    </alternativeName>
</protein>
<evidence type="ECO:0000255" key="1">
    <source>
        <dbReference type="HAMAP-Rule" id="MF_00461"/>
    </source>
</evidence>
<evidence type="ECO:0000256" key="2">
    <source>
        <dbReference type="SAM" id="MobiDB-lite"/>
    </source>
</evidence>